<proteinExistence type="inferred from homology"/>
<protein>
    <recommendedName>
        <fullName evidence="1">1-(5-phosphoribosyl)-5-[(5-phosphoribosylamino)methylideneamino] imidazole-4-carboxamide isomerase</fullName>
        <ecNumber evidence="1">5.3.1.16</ecNumber>
    </recommendedName>
    <alternativeName>
        <fullName evidence="1">Phosphoribosylformimino-5-aminoimidazole carboxamide ribotide isomerase</fullName>
    </alternativeName>
</protein>
<name>HIS4_BURPS</name>
<dbReference type="EC" id="5.3.1.16" evidence="1"/>
<dbReference type="EMBL" id="BX571965">
    <property type="protein sequence ID" value="CAH37144.1"/>
    <property type="molecule type" value="Genomic_DNA"/>
</dbReference>
<dbReference type="RefSeq" id="WP_004199906.1">
    <property type="nucleotide sequence ID" value="NZ_CP009538.1"/>
</dbReference>
<dbReference type="RefSeq" id="YP_109727.1">
    <property type="nucleotide sequence ID" value="NC_006350.1"/>
</dbReference>
<dbReference type="SMR" id="Q63Q91"/>
<dbReference type="STRING" id="272560.BPSL3134"/>
<dbReference type="GeneID" id="93061751"/>
<dbReference type="KEGG" id="bps:BPSL3134"/>
<dbReference type="PATRIC" id="fig|272560.51.peg.2109"/>
<dbReference type="eggNOG" id="COG0106">
    <property type="taxonomic scope" value="Bacteria"/>
</dbReference>
<dbReference type="UniPathway" id="UPA00031">
    <property type="reaction ID" value="UER00009"/>
</dbReference>
<dbReference type="Proteomes" id="UP000000605">
    <property type="component" value="Chromosome 1"/>
</dbReference>
<dbReference type="GO" id="GO:0005737">
    <property type="term" value="C:cytoplasm"/>
    <property type="evidence" value="ECO:0007669"/>
    <property type="project" value="UniProtKB-SubCell"/>
</dbReference>
<dbReference type="GO" id="GO:0003949">
    <property type="term" value="F:1-(5-phosphoribosyl)-5-[(5-phosphoribosylamino)methylideneamino]imidazole-4-carboxamide isomerase activity"/>
    <property type="evidence" value="ECO:0007669"/>
    <property type="project" value="UniProtKB-UniRule"/>
</dbReference>
<dbReference type="GO" id="GO:0000105">
    <property type="term" value="P:L-histidine biosynthetic process"/>
    <property type="evidence" value="ECO:0007669"/>
    <property type="project" value="UniProtKB-UniRule"/>
</dbReference>
<dbReference type="GO" id="GO:0000162">
    <property type="term" value="P:L-tryptophan biosynthetic process"/>
    <property type="evidence" value="ECO:0007669"/>
    <property type="project" value="TreeGrafter"/>
</dbReference>
<dbReference type="CDD" id="cd04732">
    <property type="entry name" value="HisA"/>
    <property type="match status" value="1"/>
</dbReference>
<dbReference type="FunFam" id="3.20.20.70:FF:000009">
    <property type="entry name" value="1-(5-phosphoribosyl)-5-[(5-phosphoribosylamino)methylideneamino] imidazole-4-carboxamide isomerase"/>
    <property type="match status" value="1"/>
</dbReference>
<dbReference type="Gene3D" id="3.20.20.70">
    <property type="entry name" value="Aldolase class I"/>
    <property type="match status" value="1"/>
</dbReference>
<dbReference type="HAMAP" id="MF_01014">
    <property type="entry name" value="HisA"/>
    <property type="match status" value="1"/>
</dbReference>
<dbReference type="InterPro" id="IPR013785">
    <property type="entry name" value="Aldolase_TIM"/>
</dbReference>
<dbReference type="InterPro" id="IPR006062">
    <property type="entry name" value="His_biosynth"/>
</dbReference>
<dbReference type="InterPro" id="IPR006063">
    <property type="entry name" value="HisA_bact_arch"/>
</dbReference>
<dbReference type="InterPro" id="IPR044524">
    <property type="entry name" value="Isoase_HisA-like"/>
</dbReference>
<dbReference type="InterPro" id="IPR023016">
    <property type="entry name" value="Isoase_HisA-like_bact"/>
</dbReference>
<dbReference type="InterPro" id="IPR011060">
    <property type="entry name" value="RibuloseP-bd_barrel"/>
</dbReference>
<dbReference type="NCBIfam" id="TIGR00007">
    <property type="entry name" value="1-(5-phosphoribosyl)-5-[(5-phosphoribosylamino)methylideneamino]imidazole-4-carboxamide isomerase"/>
    <property type="match status" value="1"/>
</dbReference>
<dbReference type="NCBIfam" id="NF010112">
    <property type="entry name" value="PRK13585.1"/>
    <property type="match status" value="1"/>
</dbReference>
<dbReference type="PANTHER" id="PTHR43090">
    <property type="entry name" value="1-(5-PHOSPHORIBOSYL)-5-[(5-PHOSPHORIBOSYLAMINO)METHYLIDENEAMINO] IMIDAZOLE-4-CARBOXAMIDE ISOMERASE"/>
    <property type="match status" value="1"/>
</dbReference>
<dbReference type="PANTHER" id="PTHR43090:SF2">
    <property type="entry name" value="1-(5-PHOSPHORIBOSYL)-5-[(5-PHOSPHORIBOSYLAMINO)METHYLIDENEAMINO] IMIDAZOLE-4-CARBOXAMIDE ISOMERASE"/>
    <property type="match status" value="1"/>
</dbReference>
<dbReference type="Pfam" id="PF00977">
    <property type="entry name" value="His_biosynth"/>
    <property type="match status" value="1"/>
</dbReference>
<dbReference type="SUPFAM" id="SSF51366">
    <property type="entry name" value="Ribulose-phoshate binding barrel"/>
    <property type="match status" value="1"/>
</dbReference>
<sequence>MLLIPAIDLKDGQCVRLKQGDMDQATIFSEDPAAMARKWVDLGARRLHLVDLNGAFAGKPKNLEAIEAILGEVGDEIPVQLGGGIRSLETIEKYLDAGLSYVIIGTAAVKDPGFLQDACSAFAGNIIVGLDAKDGKVATDGWSKLTGHEVIDLARKFEDYGVESIVYTDIGRDGMLQGINIEATVKLAQAVGIPVIASGGLSNIVDIEKLCEVEDEGIEGVICGRAIYSGDLDFAAAQKRADELNGELDDA</sequence>
<reference key="1">
    <citation type="journal article" date="2004" name="Proc. Natl. Acad. Sci. U.S.A.">
        <title>Genomic plasticity of the causative agent of melioidosis, Burkholderia pseudomallei.</title>
        <authorList>
            <person name="Holden M.T.G."/>
            <person name="Titball R.W."/>
            <person name="Peacock S.J."/>
            <person name="Cerdeno-Tarraga A.-M."/>
            <person name="Atkins T."/>
            <person name="Crossman L.C."/>
            <person name="Pitt T."/>
            <person name="Churcher C."/>
            <person name="Mungall K.L."/>
            <person name="Bentley S.D."/>
            <person name="Sebaihia M."/>
            <person name="Thomson N.R."/>
            <person name="Bason N."/>
            <person name="Beacham I.R."/>
            <person name="Brooks K."/>
            <person name="Brown K.A."/>
            <person name="Brown N.F."/>
            <person name="Challis G.L."/>
            <person name="Cherevach I."/>
            <person name="Chillingworth T."/>
            <person name="Cronin A."/>
            <person name="Crossett B."/>
            <person name="Davis P."/>
            <person name="DeShazer D."/>
            <person name="Feltwell T."/>
            <person name="Fraser A."/>
            <person name="Hance Z."/>
            <person name="Hauser H."/>
            <person name="Holroyd S."/>
            <person name="Jagels K."/>
            <person name="Keith K.E."/>
            <person name="Maddison M."/>
            <person name="Moule S."/>
            <person name="Price C."/>
            <person name="Quail M.A."/>
            <person name="Rabbinowitsch E."/>
            <person name="Rutherford K."/>
            <person name="Sanders M."/>
            <person name="Simmonds M."/>
            <person name="Songsivilai S."/>
            <person name="Stevens K."/>
            <person name="Tumapa S."/>
            <person name="Vesaratchavest M."/>
            <person name="Whitehead S."/>
            <person name="Yeats C."/>
            <person name="Barrell B.G."/>
            <person name="Oyston P.C.F."/>
            <person name="Parkhill J."/>
        </authorList>
    </citation>
    <scope>NUCLEOTIDE SEQUENCE [LARGE SCALE GENOMIC DNA]</scope>
    <source>
        <strain>K96243</strain>
    </source>
</reference>
<accession>Q63Q91</accession>
<evidence type="ECO:0000255" key="1">
    <source>
        <dbReference type="HAMAP-Rule" id="MF_01014"/>
    </source>
</evidence>
<keyword id="KW-0028">Amino-acid biosynthesis</keyword>
<keyword id="KW-0963">Cytoplasm</keyword>
<keyword id="KW-0368">Histidine biosynthesis</keyword>
<keyword id="KW-0413">Isomerase</keyword>
<keyword id="KW-1185">Reference proteome</keyword>
<feature type="chain" id="PRO_0000141992" description="1-(5-phosphoribosyl)-5-[(5-phosphoribosylamino)methylideneamino] imidazole-4-carboxamide isomerase">
    <location>
        <begin position="1"/>
        <end position="251"/>
    </location>
</feature>
<feature type="active site" description="Proton acceptor" evidence="1">
    <location>
        <position position="8"/>
    </location>
</feature>
<feature type="active site" description="Proton donor" evidence="1">
    <location>
        <position position="131"/>
    </location>
</feature>
<organism>
    <name type="scientific">Burkholderia pseudomallei (strain K96243)</name>
    <dbReference type="NCBI Taxonomy" id="272560"/>
    <lineage>
        <taxon>Bacteria</taxon>
        <taxon>Pseudomonadati</taxon>
        <taxon>Pseudomonadota</taxon>
        <taxon>Betaproteobacteria</taxon>
        <taxon>Burkholderiales</taxon>
        <taxon>Burkholderiaceae</taxon>
        <taxon>Burkholderia</taxon>
        <taxon>pseudomallei group</taxon>
    </lineage>
</organism>
<gene>
    <name evidence="1" type="primary">hisA</name>
    <name type="ordered locus">BPSL3134</name>
</gene>
<comment type="catalytic activity">
    <reaction evidence="1">
        <text>1-(5-phospho-beta-D-ribosyl)-5-[(5-phospho-beta-D-ribosylamino)methylideneamino]imidazole-4-carboxamide = 5-[(5-phospho-1-deoxy-D-ribulos-1-ylimino)methylamino]-1-(5-phospho-beta-D-ribosyl)imidazole-4-carboxamide</text>
        <dbReference type="Rhea" id="RHEA:15469"/>
        <dbReference type="ChEBI" id="CHEBI:58435"/>
        <dbReference type="ChEBI" id="CHEBI:58525"/>
        <dbReference type="EC" id="5.3.1.16"/>
    </reaction>
</comment>
<comment type="pathway">
    <text evidence="1">Amino-acid biosynthesis; L-histidine biosynthesis; L-histidine from 5-phospho-alpha-D-ribose 1-diphosphate: step 4/9.</text>
</comment>
<comment type="subcellular location">
    <subcellularLocation>
        <location evidence="1">Cytoplasm</location>
    </subcellularLocation>
</comment>
<comment type="similarity">
    <text evidence="1">Belongs to the HisA/HisF family.</text>
</comment>